<organism>
    <name type="scientific">Botryotinia fuckeliana</name>
    <name type="common">Noble rot fungus</name>
    <name type="synonym">Botrytis cinerea</name>
    <dbReference type="NCBI Taxonomy" id="40559"/>
    <lineage>
        <taxon>Eukaryota</taxon>
        <taxon>Fungi</taxon>
        <taxon>Dikarya</taxon>
        <taxon>Ascomycota</taxon>
        <taxon>Pezizomycotina</taxon>
        <taxon>Leotiomycetes</taxon>
        <taxon>Helotiales</taxon>
        <taxon>Sclerotiniaceae</taxon>
        <taxon>Botrytis</taxon>
    </lineage>
</organism>
<feature type="signal peptide" evidence="3">
    <location>
        <begin position="1"/>
        <end position="19"/>
    </location>
</feature>
<feature type="chain" id="PRO_0000267638" description="Laccase-2">
    <location>
        <begin position="20"/>
        <end position="581"/>
    </location>
</feature>
<feature type="domain" description="Plastocyanin-like 1">
    <location>
        <begin position="74"/>
        <end position="191"/>
    </location>
</feature>
<feature type="domain" description="Plastocyanin-like 2">
    <location>
        <begin position="197"/>
        <end position="353"/>
    </location>
</feature>
<feature type="domain" description="Plastocyanin-like 3">
    <location>
        <begin position="413"/>
        <end position="547"/>
    </location>
</feature>
<feature type="binding site" description="type 2 copper site" evidence="1">
    <location>
        <position position="125"/>
    </location>
    <ligand>
        <name>Cu cation</name>
        <dbReference type="ChEBI" id="CHEBI:23378"/>
        <label>1</label>
    </ligand>
</feature>
<feature type="binding site" description="type 3 copper site" evidence="1">
    <location>
        <position position="127"/>
    </location>
    <ligand>
        <name>Cu cation</name>
        <dbReference type="ChEBI" id="CHEBI:23378"/>
        <label>2</label>
    </ligand>
</feature>
<feature type="binding site" description="type 3 copper site" evidence="1">
    <location>
        <position position="169"/>
    </location>
    <ligand>
        <name>Cu cation</name>
        <dbReference type="ChEBI" id="CHEBI:23378"/>
        <label>2</label>
    </ligand>
</feature>
<feature type="binding site" description="type 3 copper site" evidence="1">
    <location>
        <position position="171"/>
    </location>
    <ligand>
        <name>Cu cation</name>
        <dbReference type="ChEBI" id="CHEBI:23378"/>
        <label>3</label>
    </ligand>
</feature>
<feature type="binding site" description="type 1 copper site" evidence="1">
    <location>
        <position position="464"/>
    </location>
    <ligand>
        <name>Cu cation</name>
        <dbReference type="ChEBI" id="CHEBI:23378"/>
        <label>4</label>
    </ligand>
</feature>
<feature type="binding site" description="type 2 copper site" evidence="1">
    <location>
        <position position="467"/>
    </location>
    <ligand>
        <name>Cu cation</name>
        <dbReference type="ChEBI" id="CHEBI:23378"/>
        <label>1</label>
    </ligand>
</feature>
<feature type="binding site" description="type 3 copper site" evidence="1">
    <location>
        <position position="469"/>
    </location>
    <ligand>
        <name>Cu cation</name>
        <dbReference type="ChEBI" id="CHEBI:23378"/>
        <label>3</label>
    </ligand>
</feature>
<feature type="binding site" description="type 3 copper site" evidence="1">
    <location>
        <position position="526"/>
    </location>
    <ligand>
        <name>Cu cation</name>
        <dbReference type="ChEBI" id="CHEBI:23378"/>
        <label>3</label>
    </ligand>
</feature>
<feature type="binding site" description="type 1 copper site" evidence="1">
    <location>
        <position position="527"/>
    </location>
    <ligand>
        <name>Cu cation</name>
        <dbReference type="ChEBI" id="CHEBI:23378"/>
        <label>4</label>
    </ligand>
</feature>
<feature type="binding site" description="type 3 copper site" evidence="1">
    <location>
        <position position="528"/>
    </location>
    <ligand>
        <name>Cu cation</name>
        <dbReference type="ChEBI" id="CHEBI:23378"/>
        <label>2</label>
    </ligand>
</feature>
<feature type="binding site" description="type 1 copper site" evidence="1">
    <location>
        <position position="532"/>
    </location>
    <ligand>
        <name>Cu cation</name>
        <dbReference type="ChEBI" id="CHEBI:23378"/>
        <label>4</label>
    </ligand>
</feature>
<feature type="glycosylation site" description="N-linked (GlcNAc...) asparagine" evidence="3">
    <location>
        <position position="77"/>
    </location>
</feature>
<feature type="glycosylation site" description="N-linked (GlcNAc...) asparagine" evidence="3">
    <location>
        <position position="93"/>
    </location>
</feature>
<feature type="glycosylation site" description="N-linked (GlcNAc...) asparagine" evidence="3">
    <location>
        <position position="120"/>
    </location>
</feature>
<feature type="glycosylation site" description="N-linked (GlcNAc...) asparagine" evidence="3">
    <location>
        <position position="232"/>
    </location>
</feature>
<feature type="glycosylation site" description="N-linked (GlcNAc...) asparagine" evidence="3">
    <location>
        <position position="283"/>
    </location>
</feature>
<feature type="glycosylation site" description="N-linked (GlcNAc...) asparagine" evidence="3">
    <location>
        <position position="343"/>
    </location>
</feature>
<feature type="glycosylation site" description="N-linked (GlcNAc...) asparagine" evidence="3">
    <location>
        <position position="408"/>
    </location>
</feature>
<feature type="glycosylation site" description="N-linked (GlcNAc...) asparagine" evidence="3">
    <location>
        <position position="427"/>
    </location>
</feature>
<feature type="glycosylation site" description="N-linked (GlcNAc...) asparagine" evidence="3">
    <location>
        <position position="441"/>
    </location>
</feature>
<feature type="disulfide bond" evidence="2">
    <location>
        <begin position="146"/>
        <end position="562"/>
    </location>
</feature>
<name>LAC2_BOTFU</name>
<gene>
    <name type="primary">lcc2</name>
</gene>
<dbReference type="EC" id="1.10.3.2" evidence="2"/>
<dbReference type="EMBL" id="AF243855">
    <property type="protein sequence ID" value="AAK77953.1"/>
    <property type="molecule type" value="Genomic_DNA"/>
</dbReference>
<dbReference type="SMR" id="Q96WM9"/>
<dbReference type="CAZy" id="AA1">
    <property type="family name" value="Auxiliary Activities 1"/>
</dbReference>
<dbReference type="GlyCosmos" id="Q96WM9">
    <property type="glycosylation" value="9 sites, No reported glycans"/>
</dbReference>
<dbReference type="OMA" id="IFHLHGY"/>
<dbReference type="PHI-base" id="PHI:552"/>
<dbReference type="GO" id="GO:0005576">
    <property type="term" value="C:extracellular region"/>
    <property type="evidence" value="ECO:0007669"/>
    <property type="project" value="UniProtKB-SubCell"/>
</dbReference>
<dbReference type="GO" id="GO:0005507">
    <property type="term" value="F:copper ion binding"/>
    <property type="evidence" value="ECO:0007669"/>
    <property type="project" value="InterPro"/>
</dbReference>
<dbReference type="GO" id="GO:0052716">
    <property type="term" value="F:hydroquinone:oxygen oxidoreductase activity"/>
    <property type="evidence" value="ECO:0007669"/>
    <property type="project" value="UniProtKB-EC"/>
</dbReference>
<dbReference type="GO" id="GO:0046274">
    <property type="term" value="P:lignin catabolic process"/>
    <property type="evidence" value="ECO:0007669"/>
    <property type="project" value="UniProtKB-KW"/>
</dbReference>
<dbReference type="CDD" id="cd13854">
    <property type="entry name" value="CuRO_1_MaLCC_like"/>
    <property type="match status" value="1"/>
</dbReference>
<dbReference type="CDD" id="cd13880">
    <property type="entry name" value="CuRO_2_MaLCC_like"/>
    <property type="match status" value="1"/>
</dbReference>
<dbReference type="CDD" id="cd13901">
    <property type="entry name" value="CuRO_3_MaLCC_like"/>
    <property type="match status" value="1"/>
</dbReference>
<dbReference type="FunFam" id="2.60.40.420:FF:000021">
    <property type="entry name" value="Extracellular dihydrogeodin oxidase/laccase"/>
    <property type="match status" value="1"/>
</dbReference>
<dbReference type="FunFam" id="2.60.40.420:FF:000038">
    <property type="entry name" value="Extracellular dihydrogeodin oxidase/laccase"/>
    <property type="match status" value="1"/>
</dbReference>
<dbReference type="FunFam" id="2.60.40.420:FF:000046">
    <property type="entry name" value="Multicopper oxidase"/>
    <property type="match status" value="1"/>
</dbReference>
<dbReference type="Gene3D" id="2.60.40.420">
    <property type="entry name" value="Cupredoxins - blue copper proteins"/>
    <property type="match status" value="3"/>
</dbReference>
<dbReference type="InterPro" id="IPR011707">
    <property type="entry name" value="Cu-oxidase-like_N"/>
</dbReference>
<dbReference type="InterPro" id="IPR001117">
    <property type="entry name" value="Cu-oxidase_2nd"/>
</dbReference>
<dbReference type="InterPro" id="IPR011706">
    <property type="entry name" value="Cu-oxidase_C"/>
</dbReference>
<dbReference type="InterPro" id="IPR045087">
    <property type="entry name" value="Cu-oxidase_fam"/>
</dbReference>
<dbReference type="InterPro" id="IPR033138">
    <property type="entry name" value="Cu_oxidase_CS"/>
</dbReference>
<dbReference type="InterPro" id="IPR002355">
    <property type="entry name" value="Cu_oxidase_Cu_BS"/>
</dbReference>
<dbReference type="InterPro" id="IPR008972">
    <property type="entry name" value="Cupredoxin"/>
</dbReference>
<dbReference type="PANTHER" id="PTHR11709">
    <property type="entry name" value="MULTI-COPPER OXIDASE"/>
    <property type="match status" value="1"/>
</dbReference>
<dbReference type="PANTHER" id="PTHR11709:SF71">
    <property type="entry name" value="OXIDOREDUCTASE TPCJ"/>
    <property type="match status" value="1"/>
</dbReference>
<dbReference type="Pfam" id="PF00394">
    <property type="entry name" value="Cu-oxidase"/>
    <property type="match status" value="1"/>
</dbReference>
<dbReference type="Pfam" id="PF07731">
    <property type="entry name" value="Cu-oxidase_2"/>
    <property type="match status" value="1"/>
</dbReference>
<dbReference type="Pfam" id="PF07732">
    <property type="entry name" value="Cu-oxidase_3"/>
    <property type="match status" value="1"/>
</dbReference>
<dbReference type="SUPFAM" id="SSF49503">
    <property type="entry name" value="Cupredoxins"/>
    <property type="match status" value="3"/>
</dbReference>
<dbReference type="PROSITE" id="PS00079">
    <property type="entry name" value="MULTICOPPER_OXIDASE1"/>
    <property type="match status" value="1"/>
</dbReference>
<dbReference type="PROSITE" id="PS00080">
    <property type="entry name" value="MULTICOPPER_OXIDASE2"/>
    <property type="match status" value="1"/>
</dbReference>
<accession>Q96WM9</accession>
<comment type="function">
    <text evidence="2">Lignin degradation and detoxification of lignin-derived products.</text>
</comment>
<comment type="catalytic activity">
    <reaction evidence="2">
        <text>4 hydroquinone + O2 = 4 benzosemiquinone + 2 H2O</text>
        <dbReference type="Rhea" id="RHEA:11276"/>
        <dbReference type="ChEBI" id="CHEBI:15377"/>
        <dbReference type="ChEBI" id="CHEBI:15379"/>
        <dbReference type="ChEBI" id="CHEBI:17594"/>
        <dbReference type="ChEBI" id="CHEBI:17977"/>
        <dbReference type="EC" id="1.10.3.2"/>
    </reaction>
</comment>
<comment type="cofactor">
    <cofactor evidence="2">
        <name>Cu cation</name>
        <dbReference type="ChEBI" id="CHEBI:23378"/>
    </cofactor>
    <text evidence="2">Binds 4 Cu cations per monomer.</text>
</comment>
<comment type="subcellular location">
    <subcellularLocation>
        <location evidence="2">Secreted</location>
    </subcellularLocation>
</comment>
<comment type="induction">
    <text evidence="4">By resveratrol and tannins.</text>
</comment>
<comment type="similarity">
    <text evidence="5">Belongs to the multicopper oxidase family.</text>
</comment>
<reference key="1">
    <citation type="journal article" date="2002" name="Mol. Microbiol.">
        <title>Resveratrol acts as a natural profungicide and induces self-intoxication by a specific laccase.</title>
        <authorList>
            <person name="Schouten A."/>
            <person name="Wagemakers L."/>
            <person name="Stefanato F.L."/>
            <person name="van der Kaaij R.M."/>
            <person name="van Kan J.A.L."/>
        </authorList>
    </citation>
    <scope>NUCLEOTIDE SEQUENCE [GENOMIC DNA]</scope>
    <scope>INDUCTION</scope>
    <source>
        <strain>SAS56</strain>
    </source>
</reference>
<evidence type="ECO:0000250" key="1">
    <source>
        <dbReference type="UniProtKB" id="D0VWU3"/>
    </source>
</evidence>
<evidence type="ECO:0000250" key="2">
    <source>
        <dbReference type="UniProtKB" id="Q70KY3"/>
    </source>
</evidence>
<evidence type="ECO:0000255" key="3"/>
<evidence type="ECO:0000269" key="4">
    <source>
    </source>
</evidence>
<evidence type="ECO:0000305" key="5"/>
<sequence>MKYSTVFTALTALFAQASATAIPAVRSPLAPRQSTTASCANSATSRSCWGEYSIDTNWYDVTPNTGVTREYWLSVENSTITPDGYTRSAMTFNGTVPGPAITADWGDNLIIHVTNNLQHNGTSIHWHGIRQLGSLEYDGVPGVTQCPIAPGDTLTYKFQATQYGTTWYHSHFSLQYADGLFGPLIINGPATADYDEDVGAIFLQDWAHKSVFEIWDSARQGAPPALENTLMNGTNIYDCSASTDANCVGGGKKFELTFVEGTKYRLRLINVGIDSHFEFAIDNHTLTVIANDLVPIVPYTTDTLLIGIGQRYDVIVEANAAADNYWIRGNWGTTCSSNSEAANATGILRYDSSSTVDPTSVGVTPRGTCADEPVASLVPHLALDVGGYSLVDEQVSFAFTNYFTWTINSSSLLLDWSSPTTLKIFNNETIFPTDYNVVALNQTDANEEWVVYVIEDLTGFGIWHPIHLHGHDFYVVAQETDVFSATKSPANFNLVNPPRRDVAALPGNGYLAIAFKLDNPGSWLLHCHIAWHASEGLAMQFVESQSSIAIGMSDTDIFEDTCANWNAYTPTELFAEDDSGI</sequence>
<protein>
    <recommendedName>
        <fullName>Laccase-2</fullName>
        <ecNumber evidence="2">1.10.3.2</ecNumber>
    </recommendedName>
    <alternativeName>
        <fullName>Benzenediol:oxygen oxidoreductase 2</fullName>
    </alternativeName>
    <alternativeName>
        <fullName>Diphenol oxidase 2</fullName>
    </alternativeName>
    <alternativeName>
        <fullName>Urishiol oxidase 2</fullName>
    </alternativeName>
</protein>
<keyword id="KW-0186">Copper</keyword>
<keyword id="KW-1015">Disulfide bond</keyword>
<keyword id="KW-0325">Glycoprotein</keyword>
<keyword id="KW-0439">Lignin degradation</keyword>
<keyword id="KW-0479">Metal-binding</keyword>
<keyword id="KW-0560">Oxidoreductase</keyword>
<keyword id="KW-0677">Repeat</keyword>
<keyword id="KW-0964">Secreted</keyword>
<keyword id="KW-0732">Signal</keyword>
<proteinExistence type="evidence at transcript level"/>